<sequence>MKQIFIGIIRFYQKFISPMTPPTCRFYPTCSHYGLEAFQKHGAFKGFWLTCKRILKCHPFHPGGFDPVPDKKDDKVNS</sequence>
<name>YIDD_BACC3</name>
<reference key="1">
    <citation type="submission" date="2009-02" db="EMBL/GenBank/DDBJ databases">
        <title>Genome sequence of Bacillus cereus 03BB102.</title>
        <authorList>
            <person name="Dodson R.J."/>
            <person name="Jackson P."/>
            <person name="Munk A.C."/>
            <person name="Brettin T."/>
            <person name="Bruce D."/>
            <person name="Detter C."/>
            <person name="Tapia R."/>
            <person name="Han C."/>
            <person name="Sutton G."/>
            <person name="Sims D."/>
        </authorList>
    </citation>
    <scope>NUCLEOTIDE SEQUENCE [LARGE SCALE GENOMIC DNA]</scope>
    <source>
        <strain>03BB102</strain>
    </source>
</reference>
<dbReference type="EMBL" id="CP001407">
    <property type="protein sequence ID" value="ACO30846.1"/>
    <property type="molecule type" value="Genomic_DNA"/>
</dbReference>
<dbReference type="KEGG" id="bcx:BCA_4924"/>
<dbReference type="PATRIC" id="fig|572264.18.peg.4869"/>
<dbReference type="Proteomes" id="UP000002210">
    <property type="component" value="Chromosome"/>
</dbReference>
<dbReference type="GO" id="GO:0005886">
    <property type="term" value="C:plasma membrane"/>
    <property type="evidence" value="ECO:0007669"/>
    <property type="project" value="UniProtKB-SubCell"/>
</dbReference>
<dbReference type="HAMAP" id="MF_00386">
    <property type="entry name" value="UPF0161_YidD"/>
    <property type="match status" value="1"/>
</dbReference>
<dbReference type="InterPro" id="IPR002696">
    <property type="entry name" value="Membr_insert_effic_factor_YidD"/>
</dbReference>
<dbReference type="NCBIfam" id="TIGR00278">
    <property type="entry name" value="membrane protein insertion efficiency factor YidD"/>
    <property type="match status" value="1"/>
</dbReference>
<dbReference type="PANTHER" id="PTHR33383">
    <property type="entry name" value="MEMBRANE PROTEIN INSERTION EFFICIENCY FACTOR-RELATED"/>
    <property type="match status" value="1"/>
</dbReference>
<dbReference type="PANTHER" id="PTHR33383:SF1">
    <property type="entry name" value="MEMBRANE PROTEIN INSERTION EFFICIENCY FACTOR-RELATED"/>
    <property type="match status" value="1"/>
</dbReference>
<dbReference type="Pfam" id="PF01809">
    <property type="entry name" value="YidD"/>
    <property type="match status" value="1"/>
</dbReference>
<dbReference type="SMART" id="SM01234">
    <property type="entry name" value="Haemolytic"/>
    <property type="match status" value="1"/>
</dbReference>
<organism>
    <name type="scientific">Bacillus cereus (strain 03BB102)</name>
    <dbReference type="NCBI Taxonomy" id="572264"/>
    <lineage>
        <taxon>Bacteria</taxon>
        <taxon>Bacillati</taxon>
        <taxon>Bacillota</taxon>
        <taxon>Bacilli</taxon>
        <taxon>Bacillales</taxon>
        <taxon>Bacillaceae</taxon>
        <taxon>Bacillus</taxon>
        <taxon>Bacillus cereus group</taxon>
    </lineage>
</organism>
<comment type="function">
    <text evidence="1">Could be involved in insertion of integral membrane proteins into the membrane.</text>
</comment>
<comment type="subcellular location">
    <subcellularLocation>
        <location evidence="1">Cell membrane</location>
        <topology evidence="1">Peripheral membrane protein</topology>
        <orientation evidence="1">Cytoplasmic side</orientation>
    </subcellularLocation>
</comment>
<comment type="similarity">
    <text evidence="1">Belongs to the UPF0161 family.</text>
</comment>
<accession>C1EW67</accession>
<gene>
    <name type="ordered locus">BCA_4924</name>
</gene>
<proteinExistence type="inferred from homology"/>
<keyword id="KW-1003">Cell membrane</keyword>
<keyword id="KW-0472">Membrane</keyword>
<protein>
    <recommendedName>
        <fullName evidence="1">Putative membrane protein insertion efficiency factor</fullName>
    </recommendedName>
</protein>
<evidence type="ECO:0000255" key="1">
    <source>
        <dbReference type="HAMAP-Rule" id="MF_00386"/>
    </source>
</evidence>
<feature type="chain" id="PRO_1000197740" description="Putative membrane protein insertion efficiency factor">
    <location>
        <begin position="1"/>
        <end position="78"/>
    </location>
</feature>